<name>SYDND_NITV2</name>
<accession>Q725Q7</accession>
<comment type="function">
    <text evidence="1">Aspartyl-tRNA synthetase with relaxed tRNA specificity since it is able to aspartylate not only its cognate tRNA(Asp) but also tRNA(Asn). Reaction proceeds in two steps: L-aspartate is first activated by ATP to form Asp-AMP and then transferred to the acceptor end of tRNA(Asp/Asn).</text>
</comment>
<comment type="catalytic activity">
    <reaction evidence="1">
        <text>tRNA(Asx) + L-aspartate + ATP = L-aspartyl-tRNA(Asx) + AMP + diphosphate</text>
        <dbReference type="Rhea" id="RHEA:18349"/>
        <dbReference type="Rhea" id="RHEA-COMP:9710"/>
        <dbReference type="Rhea" id="RHEA-COMP:9711"/>
        <dbReference type="ChEBI" id="CHEBI:29991"/>
        <dbReference type="ChEBI" id="CHEBI:30616"/>
        <dbReference type="ChEBI" id="CHEBI:33019"/>
        <dbReference type="ChEBI" id="CHEBI:78442"/>
        <dbReference type="ChEBI" id="CHEBI:78516"/>
        <dbReference type="ChEBI" id="CHEBI:456215"/>
        <dbReference type="EC" id="6.1.1.23"/>
    </reaction>
</comment>
<comment type="subunit">
    <text evidence="1">Homodimer.</text>
</comment>
<comment type="subcellular location">
    <subcellularLocation>
        <location evidence="1">Cytoplasm</location>
    </subcellularLocation>
</comment>
<comment type="similarity">
    <text evidence="1">Belongs to the class-II aminoacyl-tRNA synthetase family. Type 1 subfamily.</text>
</comment>
<proteinExistence type="inferred from homology"/>
<reference key="1">
    <citation type="journal article" date="2004" name="Nat. Biotechnol.">
        <title>The genome sequence of the anaerobic, sulfate-reducing bacterium Desulfovibrio vulgaris Hildenborough.</title>
        <authorList>
            <person name="Heidelberg J.F."/>
            <person name="Seshadri R."/>
            <person name="Haveman S.A."/>
            <person name="Hemme C.L."/>
            <person name="Paulsen I.T."/>
            <person name="Kolonay J.F."/>
            <person name="Eisen J.A."/>
            <person name="Ward N.L."/>
            <person name="Methe B.A."/>
            <person name="Brinkac L.M."/>
            <person name="Daugherty S.C."/>
            <person name="DeBoy R.T."/>
            <person name="Dodson R.J."/>
            <person name="Durkin A.S."/>
            <person name="Madupu R."/>
            <person name="Nelson W.C."/>
            <person name="Sullivan S.A."/>
            <person name="Fouts D.E."/>
            <person name="Haft D.H."/>
            <person name="Selengut J."/>
            <person name="Peterson J.D."/>
            <person name="Davidsen T.M."/>
            <person name="Zafar N."/>
            <person name="Zhou L."/>
            <person name="Radune D."/>
            <person name="Dimitrov G."/>
            <person name="Hance M."/>
            <person name="Tran K."/>
            <person name="Khouri H.M."/>
            <person name="Gill J."/>
            <person name="Utterback T.R."/>
            <person name="Feldblyum T.V."/>
            <person name="Wall J.D."/>
            <person name="Voordouw G."/>
            <person name="Fraser C.M."/>
        </authorList>
    </citation>
    <scope>NUCLEOTIDE SEQUENCE [LARGE SCALE GENOMIC DNA]</scope>
    <source>
        <strain>ATCC 29579 / DSM 644 / CCUG 34227 / NCIMB 8303 / VKM B-1760 / Hildenborough</strain>
    </source>
</reference>
<protein>
    <recommendedName>
        <fullName evidence="1">Aspartate--tRNA(Asp/Asn) ligase</fullName>
        <ecNumber evidence="1">6.1.1.23</ecNumber>
    </recommendedName>
    <alternativeName>
        <fullName evidence="1">Aspartyl-tRNA synthetase</fullName>
        <shortName evidence="1">AspRS</shortName>
    </alternativeName>
    <alternativeName>
        <fullName evidence="1">Non-discriminating aspartyl-tRNA synthetase</fullName>
        <shortName evidence="1">ND-AspRS</shortName>
    </alternativeName>
</protein>
<keyword id="KW-0030">Aminoacyl-tRNA synthetase</keyword>
<keyword id="KW-0067">ATP-binding</keyword>
<keyword id="KW-0963">Cytoplasm</keyword>
<keyword id="KW-0436">Ligase</keyword>
<keyword id="KW-0547">Nucleotide-binding</keyword>
<keyword id="KW-0648">Protein biosynthesis</keyword>
<keyword id="KW-1185">Reference proteome</keyword>
<gene>
    <name evidence="1" type="primary">aspS</name>
    <name type="ordered locus">DVU_3367</name>
</gene>
<sequence>MSDQIADIQLEHQQYVAPLGDWQRTHSCCELTAADVGNDVCIMGWVQYRRDHGGLIFVDLRDRKGLTQVVFSPDFAPEAHKDAHIVRSEYVLAIRGRVRPRPEGMTNPGMKTGEIEVVVSEWKLLNTSKTPPFLIEDRTEASENLRLAWRYLDLRRPRMARNFMLRHRAAQSARRYLDELDFLEIETPYLTKATPEGARDFLVPSRLNHGMFYALPQSPQIFKQLLMVSGMDRYYQIVRCFRDEDMRADRQLEFTQIDIEMSFVDEERVMSMAEGLMSRVMKDTLGVDVTVPFPRMTYDQAMGEYGVDKPDTRFDLRLKDVTDAVRGSEFKLFAKAPLVKAMRVPGGETMTRKEIDEFTEFVKIYGAQGLAWIKIREGEWQSPIAKFLSEAERAALVAALGLEVGDIVFFQAGEPGMVNAALGNLRVKLGQHLGLIPEDTYNFLWVTDFPLFEYDEEEKRYVACHHPFTSPKDGHFDLMTSDPAAARARAYDMVLNGYELGGGSIRIHSAEVQRRMFAALGLDPQEAEEKFGFLIQALEHGAPPHGGIAFGMDRLVMLLTGSPSIRDVIAFPKTQKATCLMTQAPDAVSARQLRDLGIRLRETPQEQKPE</sequence>
<dbReference type="EC" id="6.1.1.23" evidence="1"/>
<dbReference type="EMBL" id="AE017285">
    <property type="protein sequence ID" value="AAS97836.1"/>
    <property type="molecule type" value="Genomic_DNA"/>
</dbReference>
<dbReference type="RefSeq" id="WP_010940622.1">
    <property type="nucleotide sequence ID" value="NC_002937.3"/>
</dbReference>
<dbReference type="RefSeq" id="YP_012576.1">
    <property type="nucleotide sequence ID" value="NC_002937.3"/>
</dbReference>
<dbReference type="SMR" id="Q725Q7"/>
<dbReference type="STRING" id="882.DVU_3367"/>
<dbReference type="PaxDb" id="882-DVU_3367"/>
<dbReference type="EnsemblBacteria" id="AAS97836">
    <property type="protein sequence ID" value="AAS97836"/>
    <property type="gene ID" value="DVU_3367"/>
</dbReference>
<dbReference type="KEGG" id="dvu:DVU_3367"/>
<dbReference type="PATRIC" id="fig|882.5.peg.3057"/>
<dbReference type="eggNOG" id="COG0173">
    <property type="taxonomic scope" value="Bacteria"/>
</dbReference>
<dbReference type="HOGENOM" id="CLU_014330_3_2_7"/>
<dbReference type="OrthoDB" id="9802326at2"/>
<dbReference type="PhylomeDB" id="Q725Q7"/>
<dbReference type="Proteomes" id="UP000002194">
    <property type="component" value="Chromosome"/>
</dbReference>
<dbReference type="GO" id="GO:0005737">
    <property type="term" value="C:cytoplasm"/>
    <property type="evidence" value="ECO:0007669"/>
    <property type="project" value="UniProtKB-SubCell"/>
</dbReference>
<dbReference type="GO" id="GO:0004815">
    <property type="term" value="F:aspartate-tRNA ligase activity"/>
    <property type="evidence" value="ECO:0007669"/>
    <property type="project" value="UniProtKB-UniRule"/>
</dbReference>
<dbReference type="GO" id="GO:0050560">
    <property type="term" value="F:aspartate-tRNA(Asn) ligase activity"/>
    <property type="evidence" value="ECO:0007669"/>
    <property type="project" value="UniProtKB-EC"/>
</dbReference>
<dbReference type="GO" id="GO:0005524">
    <property type="term" value="F:ATP binding"/>
    <property type="evidence" value="ECO:0007669"/>
    <property type="project" value="UniProtKB-UniRule"/>
</dbReference>
<dbReference type="GO" id="GO:0003676">
    <property type="term" value="F:nucleic acid binding"/>
    <property type="evidence" value="ECO:0007669"/>
    <property type="project" value="InterPro"/>
</dbReference>
<dbReference type="GO" id="GO:0006422">
    <property type="term" value="P:aspartyl-tRNA aminoacylation"/>
    <property type="evidence" value="ECO:0007669"/>
    <property type="project" value="UniProtKB-UniRule"/>
</dbReference>
<dbReference type="CDD" id="cd00777">
    <property type="entry name" value="AspRS_core"/>
    <property type="match status" value="1"/>
</dbReference>
<dbReference type="CDD" id="cd04317">
    <property type="entry name" value="EcAspRS_like_N"/>
    <property type="match status" value="1"/>
</dbReference>
<dbReference type="Gene3D" id="3.30.930.10">
    <property type="entry name" value="Bira Bifunctional Protein, Domain 2"/>
    <property type="match status" value="1"/>
</dbReference>
<dbReference type="Gene3D" id="3.30.1360.30">
    <property type="entry name" value="GAD-like domain"/>
    <property type="match status" value="1"/>
</dbReference>
<dbReference type="Gene3D" id="2.40.50.140">
    <property type="entry name" value="Nucleic acid-binding proteins"/>
    <property type="match status" value="1"/>
</dbReference>
<dbReference type="HAMAP" id="MF_00044">
    <property type="entry name" value="Asp_tRNA_synth_type1"/>
    <property type="match status" value="1"/>
</dbReference>
<dbReference type="InterPro" id="IPR004364">
    <property type="entry name" value="Aa-tRNA-synt_II"/>
</dbReference>
<dbReference type="InterPro" id="IPR006195">
    <property type="entry name" value="aa-tRNA-synth_II"/>
</dbReference>
<dbReference type="InterPro" id="IPR045864">
    <property type="entry name" value="aa-tRNA-synth_II/BPL/LPL"/>
</dbReference>
<dbReference type="InterPro" id="IPR004524">
    <property type="entry name" value="Asp-tRNA-ligase_1"/>
</dbReference>
<dbReference type="InterPro" id="IPR047089">
    <property type="entry name" value="Asp-tRNA-ligase_1_N"/>
</dbReference>
<dbReference type="InterPro" id="IPR002312">
    <property type="entry name" value="Asp/Asn-tRNA-synth_IIb"/>
</dbReference>
<dbReference type="InterPro" id="IPR047090">
    <property type="entry name" value="AspRS_core"/>
</dbReference>
<dbReference type="InterPro" id="IPR004115">
    <property type="entry name" value="GAD-like_sf"/>
</dbReference>
<dbReference type="InterPro" id="IPR029351">
    <property type="entry name" value="GAD_dom"/>
</dbReference>
<dbReference type="InterPro" id="IPR012340">
    <property type="entry name" value="NA-bd_OB-fold"/>
</dbReference>
<dbReference type="InterPro" id="IPR004365">
    <property type="entry name" value="NA-bd_OB_tRNA"/>
</dbReference>
<dbReference type="NCBIfam" id="TIGR00459">
    <property type="entry name" value="aspS_bact"/>
    <property type="match status" value="1"/>
</dbReference>
<dbReference type="NCBIfam" id="NF001750">
    <property type="entry name" value="PRK00476.1"/>
    <property type="match status" value="1"/>
</dbReference>
<dbReference type="PANTHER" id="PTHR22594:SF5">
    <property type="entry name" value="ASPARTATE--TRNA LIGASE, MITOCHONDRIAL"/>
    <property type="match status" value="1"/>
</dbReference>
<dbReference type="PANTHER" id="PTHR22594">
    <property type="entry name" value="ASPARTYL/LYSYL-TRNA SYNTHETASE"/>
    <property type="match status" value="1"/>
</dbReference>
<dbReference type="Pfam" id="PF02938">
    <property type="entry name" value="GAD"/>
    <property type="match status" value="1"/>
</dbReference>
<dbReference type="Pfam" id="PF00152">
    <property type="entry name" value="tRNA-synt_2"/>
    <property type="match status" value="1"/>
</dbReference>
<dbReference type="Pfam" id="PF01336">
    <property type="entry name" value="tRNA_anti-codon"/>
    <property type="match status" value="1"/>
</dbReference>
<dbReference type="PRINTS" id="PR01042">
    <property type="entry name" value="TRNASYNTHASP"/>
</dbReference>
<dbReference type="SUPFAM" id="SSF55681">
    <property type="entry name" value="Class II aaRS and biotin synthetases"/>
    <property type="match status" value="1"/>
</dbReference>
<dbReference type="SUPFAM" id="SSF55261">
    <property type="entry name" value="GAD domain-like"/>
    <property type="match status" value="1"/>
</dbReference>
<dbReference type="SUPFAM" id="SSF50249">
    <property type="entry name" value="Nucleic acid-binding proteins"/>
    <property type="match status" value="1"/>
</dbReference>
<dbReference type="PROSITE" id="PS50862">
    <property type="entry name" value="AA_TRNA_LIGASE_II"/>
    <property type="match status" value="1"/>
</dbReference>
<evidence type="ECO:0000255" key="1">
    <source>
        <dbReference type="HAMAP-Rule" id="MF_00044"/>
    </source>
</evidence>
<feature type="chain" id="PRO_0000110867" description="Aspartate--tRNA(Asp/Asn) ligase">
    <location>
        <begin position="1"/>
        <end position="610"/>
    </location>
</feature>
<feature type="region of interest" description="Aspartate" evidence="1">
    <location>
        <begin position="220"/>
        <end position="223"/>
    </location>
</feature>
<feature type="binding site" evidence="1">
    <location>
        <position position="196"/>
    </location>
    <ligand>
        <name>L-aspartate</name>
        <dbReference type="ChEBI" id="CHEBI:29991"/>
    </ligand>
</feature>
<feature type="binding site" evidence="1">
    <location>
        <begin position="242"/>
        <end position="244"/>
    </location>
    <ligand>
        <name>ATP</name>
        <dbReference type="ChEBI" id="CHEBI:30616"/>
    </ligand>
</feature>
<feature type="binding site" evidence="1">
    <location>
        <position position="242"/>
    </location>
    <ligand>
        <name>L-aspartate</name>
        <dbReference type="ChEBI" id="CHEBI:29991"/>
    </ligand>
</feature>
<feature type="binding site" evidence="1">
    <location>
        <position position="251"/>
    </location>
    <ligand>
        <name>ATP</name>
        <dbReference type="ChEBI" id="CHEBI:30616"/>
    </ligand>
</feature>
<feature type="binding site" evidence="1">
    <location>
        <position position="465"/>
    </location>
    <ligand>
        <name>L-aspartate</name>
        <dbReference type="ChEBI" id="CHEBI:29991"/>
    </ligand>
</feature>
<feature type="binding site" evidence="1">
    <location>
        <position position="499"/>
    </location>
    <ligand>
        <name>ATP</name>
        <dbReference type="ChEBI" id="CHEBI:30616"/>
    </ligand>
</feature>
<feature type="binding site" evidence="1">
    <location>
        <position position="506"/>
    </location>
    <ligand>
        <name>L-aspartate</name>
        <dbReference type="ChEBI" id="CHEBI:29991"/>
    </ligand>
</feature>
<feature type="binding site" evidence="1">
    <location>
        <begin position="551"/>
        <end position="554"/>
    </location>
    <ligand>
        <name>ATP</name>
        <dbReference type="ChEBI" id="CHEBI:30616"/>
    </ligand>
</feature>
<feature type="site" description="Important for tRNA non-discrimination" evidence="1">
    <location>
        <position position="52"/>
    </location>
</feature>
<feature type="site" description="Important for tRNA non-discrimination" evidence="1">
    <location>
        <position position="104"/>
    </location>
</feature>
<organism>
    <name type="scientific">Nitratidesulfovibrio vulgaris (strain ATCC 29579 / DSM 644 / CCUG 34227 / NCIMB 8303 / VKM B-1760 / Hildenborough)</name>
    <name type="common">Desulfovibrio vulgaris</name>
    <dbReference type="NCBI Taxonomy" id="882"/>
    <lineage>
        <taxon>Bacteria</taxon>
        <taxon>Pseudomonadati</taxon>
        <taxon>Thermodesulfobacteriota</taxon>
        <taxon>Desulfovibrionia</taxon>
        <taxon>Desulfovibrionales</taxon>
        <taxon>Desulfovibrionaceae</taxon>
        <taxon>Nitratidesulfovibrio</taxon>
    </lineage>
</organism>